<keyword id="KW-1185">Reference proteome</keyword>
<keyword id="KW-0687">Ribonucleoprotein</keyword>
<keyword id="KW-0689">Ribosomal protein</keyword>
<keyword id="KW-0694">RNA-binding</keyword>
<keyword id="KW-0699">rRNA-binding</keyword>
<gene>
    <name evidence="1" type="primary">rpsT</name>
    <name type="ordered locus">Mmc1_3424</name>
</gene>
<evidence type="ECO:0000255" key="1">
    <source>
        <dbReference type="HAMAP-Rule" id="MF_00500"/>
    </source>
</evidence>
<evidence type="ECO:0000305" key="2"/>
<organism>
    <name type="scientific">Magnetococcus marinus (strain ATCC BAA-1437 / JCM 17883 / MC-1)</name>
    <dbReference type="NCBI Taxonomy" id="156889"/>
    <lineage>
        <taxon>Bacteria</taxon>
        <taxon>Pseudomonadati</taxon>
        <taxon>Pseudomonadota</taxon>
        <taxon>Alphaproteobacteria</taxon>
        <taxon>Magnetococcales</taxon>
        <taxon>Magnetococcaceae</taxon>
        <taxon>Magnetococcus</taxon>
    </lineage>
</organism>
<name>RS20_MAGMM</name>
<reference key="1">
    <citation type="journal article" date="2009" name="Appl. Environ. Microbiol.">
        <title>Complete genome sequence of the chemolithoautotrophic marine magnetotactic coccus strain MC-1.</title>
        <authorList>
            <person name="Schubbe S."/>
            <person name="Williams T.J."/>
            <person name="Xie G."/>
            <person name="Kiss H.E."/>
            <person name="Brettin T.S."/>
            <person name="Martinez D."/>
            <person name="Ross C.A."/>
            <person name="Schuler D."/>
            <person name="Cox B.L."/>
            <person name="Nealson K.H."/>
            <person name="Bazylinski D.A."/>
        </authorList>
    </citation>
    <scope>NUCLEOTIDE SEQUENCE [LARGE SCALE GENOMIC DNA]</scope>
    <source>
        <strain>ATCC BAA-1437 / JCM 17883 / MC-1</strain>
    </source>
</reference>
<proteinExistence type="inferred from homology"/>
<accession>A0LD67</accession>
<feature type="chain" id="PRO_1000014600" description="Small ribosomal subunit protein bS20">
    <location>
        <begin position="1"/>
        <end position="92"/>
    </location>
</feature>
<protein>
    <recommendedName>
        <fullName evidence="1">Small ribosomal subunit protein bS20</fullName>
    </recommendedName>
    <alternativeName>
        <fullName evidence="2">30S ribosomal protein S20</fullName>
    </alternativeName>
</protein>
<dbReference type="EMBL" id="CP000471">
    <property type="protein sequence ID" value="ABK45910.1"/>
    <property type="molecule type" value="Genomic_DNA"/>
</dbReference>
<dbReference type="RefSeq" id="WP_011714967.1">
    <property type="nucleotide sequence ID" value="NC_008576.1"/>
</dbReference>
<dbReference type="SMR" id="A0LD67"/>
<dbReference type="STRING" id="156889.Mmc1_3424"/>
<dbReference type="KEGG" id="mgm:Mmc1_3424"/>
<dbReference type="eggNOG" id="COG0268">
    <property type="taxonomic scope" value="Bacteria"/>
</dbReference>
<dbReference type="HOGENOM" id="CLU_160655_3_0_5"/>
<dbReference type="OrthoDB" id="9807974at2"/>
<dbReference type="Proteomes" id="UP000002586">
    <property type="component" value="Chromosome"/>
</dbReference>
<dbReference type="GO" id="GO:0005829">
    <property type="term" value="C:cytosol"/>
    <property type="evidence" value="ECO:0007669"/>
    <property type="project" value="TreeGrafter"/>
</dbReference>
<dbReference type="GO" id="GO:0015935">
    <property type="term" value="C:small ribosomal subunit"/>
    <property type="evidence" value="ECO:0007669"/>
    <property type="project" value="TreeGrafter"/>
</dbReference>
<dbReference type="GO" id="GO:0070181">
    <property type="term" value="F:small ribosomal subunit rRNA binding"/>
    <property type="evidence" value="ECO:0007669"/>
    <property type="project" value="TreeGrafter"/>
</dbReference>
<dbReference type="GO" id="GO:0003735">
    <property type="term" value="F:structural constituent of ribosome"/>
    <property type="evidence" value="ECO:0007669"/>
    <property type="project" value="InterPro"/>
</dbReference>
<dbReference type="GO" id="GO:0006412">
    <property type="term" value="P:translation"/>
    <property type="evidence" value="ECO:0007669"/>
    <property type="project" value="UniProtKB-UniRule"/>
</dbReference>
<dbReference type="FunFam" id="1.20.58.110:FF:000001">
    <property type="entry name" value="30S ribosomal protein S20"/>
    <property type="match status" value="1"/>
</dbReference>
<dbReference type="Gene3D" id="1.20.58.110">
    <property type="entry name" value="Ribosomal protein S20"/>
    <property type="match status" value="1"/>
</dbReference>
<dbReference type="HAMAP" id="MF_00500">
    <property type="entry name" value="Ribosomal_bS20"/>
    <property type="match status" value="1"/>
</dbReference>
<dbReference type="InterPro" id="IPR002583">
    <property type="entry name" value="Ribosomal_bS20"/>
</dbReference>
<dbReference type="InterPro" id="IPR036510">
    <property type="entry name" value="Ribosomal_bS20_sf"/>
</dbReference>
<dbReference type="NCBIfam" id="TIGR00029">
    <property type="entry name" value="S20"/>
    <property type="match status" value="1"/>
</dbReference>
<dbReference type="PANTHER" id="PTHR33398">
    <property type="entry name" value="30S RIBOSOMAL PROTEIN S20"/>
    <property type="match status" value="1"/>
</dbReference>
<dbReference type="PANTHER" id="PTHR33398:SF1">
    <property type="entry name" value="SMALL RIBOSOMAL SUBUNIT PROTEIN BS20C"/>
    <property type="match status" value="1"/>
</dbReference>
<dbReference type="Pfam" id="PF01649">
    <property type="entry name" value="Ribosomal_S20p"/>
    <property type="match status" value="1"/>
</dbReference>
<dbReference type="SUPFAM" id="SSF46992">
    <property type="entry name" value="Ribosomal protein S20"/>
    <property type="match status" value="1"/>
</dbReference>
<sequence length="92" mass="10087">MANHKSALKRIRQSAKRTVANRIDKARMRTFAKKVLAAVEAGDVELAQQTLRDATSVISRTAQRGVIHTNQASRRIARLNSHVKKLAVAAAS</sequence>
<comment type="function">
    <text evidence="1">Binds directly to 16S ribosomal RNA.</text>
</comment>
<comment type="similarity">
    <text evidence="1">Belongs to the bacterial ribosomal protein bS20 family.</text>
</comment>